<keyword id="KW-0032">Aminotransferase</keyword>
<keyword id="KW-0046">Antibiotic resistance</keyword>
<keyword id="KW-0441">Lipid A biosynthesis</keyword>
<keyword id="KW-0444">Lipid biosynthesis</keyword>
<keyword id="KW-0443">Lipid metabolism</keyword>
<keyword id="KW-0448">Lipopolysaccharide biosynthesis</keyword>
<keyword id="KW-0663">Pyridoxal phosphate</keyword>
<keyword id="KW-1185">Reference proteome</keyword>
<keyword id="KW-0808">Transferase</keyword>
<organism>
    <name type="scientific">Yersinia pestis</name>
    <dbReference type="NCBI Taxonomy" id="632"/>
    <lineage>
        <taxon>Bacteria</taxon>
        <taxon>Pseudomonadati</taxon>
        <taxon>Pseudomonadota</taxon>
        <taxon>Gammaproteobacteria</taxon>
        <taxon>Enterobacterales</taxon>
        <taxon>Yersiniaceae</taxon>
        <taxon>Yersinia</taxon>
    </lineage>
</organism>
<proteinExistence type="inferred from homology"/>
<feature type="chain" id="PRO_0000110030" description="UDP-4-amino-4-deoxy-L-arabinose--oxoglutarate aminotransferase">
    <location>
        <begin position="1"/>
        <end position="384"/>
    </location>
</feature>
<feature type="modified residue" description="N6-(pyridoxal phosphate)lysine" evidence="1">
    <location>
        <position position="182"/>
    </location>
</feature>
<dbReference type="EC" id="2.6.1.87" evidence="1"/>
<dbReference type="EMBL" id="AL590842">
    <property type="protein sequence ID" value="CAL21049.1"/>
    <property type="molecule type" value="Genomic_DNA"/>
</dbReference>
<dbReference type="EMBL" id="AE009952">
    <property type="protein sequence ID" value="AAM85484.1"/>
    <property type="molecule type" value="Genomic_DNA"/>
</dbReference>
<dbReference type="EMBL" id="AE017042">
    <property type="protein sequence ID" value="AAS62415.1"/>
    <property type="molecule type" value="Genomic_DNA"/>
</dbReference>
<dbReference type="PIR" id="AF0295">
    <property type="entry name" value="AF0295"/>
</dbReference>
<dbReference type="RefSeq" id="WP_002211825.1">
    <property type="nucleotide sequence ID" value="NZ_WUCM01000025.1"/>
</dbReference>
<dbReference type="RefSeq" id="YP_002347385.1">
    <property type="nucleotide sequence ID" value="NC_003143.1"/>
</dbReference>
<dbReference type="SMR" id="Q93PE0"/>
<dbReference type="IntAct" id="Q93PE0">
    <property type="interactions" value="1"/>
</dbReference>
<dbReference type="STRING" id="214092.YPO2422"/>
<dbReference type="PaxDb" id="214092-YPO2422"/>
<dbReference type="DNASU" id="1146864"/>
<dbReference type="EnsemblBacteria" id="AAS62415">
    <property type="protein sequence ID" value="AAS62415"/>
    <property type="gene ID" value="YP_2209"/>
</dbReference>
<dbReference type="GeneID" id="57976255"/>
<dbReference type="KEGG" id="ype:YPO2422"/>
<dbReference type="KEGG" id="ypk:y1917"/>
<dbReference type="KEGG" id="ypm:YP_2209"/>
<dbReference type="PATRIC" id="fig|214092.21.peg.2830"/>
<dbReference type="eggNOG" id="COG0399">
    <property type="taxonomic scope" value="Bacteria"/>
</dbReference>
<dbReference type="HOGENOM" id="CLU_033332_0_3_6"/>
<dbReference type="OMA" id="RRGVMNI"/>
<dbReference type="OrthoDB" id="9804264at2"/>
<dbReference type="UniPathway" id="UPA00030"/>
<dbReference type="UniPathway" id="UPA00032">
    <property type="reaction ID" value="UER00493"/>
</dbReference>
<dbReference type="Proteomes" id="UP000000815">
    <property type="component" value="Chromosome"/>
</dbReference>
<dbReference type="Proteomes" id="UP000001019">
    <property type="component" value="Chromosome"/>
</dbReference>
<dbReference type="Proteomes" id="UP000002490">
    <property type="component" value="Chromosome"/>
</dbReference>
<dbReference type="GO" id="GO:0016020">
    <property type="term" value="C:membrane"/>
    <property type="evidence" value="ECO:0007669"/>
    <property type="project" value="GOC"/>
</dbReference>
<dbReference type="GO" id="GO:0030170">
    <property type="term" value="F:pyridoxal phosphate binding"/>
    <property type="evidence" value="ECO:0000318"/>
    <property type="project" value="GO_Central"/>
</dbReference>
<dbReference type="GO" id="GO:0008483">
    <property type="term" value="F:transaminase activity"/>
    <property type="evidence" value="ECO:0000318"/>
    <property type="project" value="GO_Central"/>
</dbReference>
<dbReference type="GO" id="GO:0099620">
    <property type="term" value="F:UDP-4-amino-4-deoxy-L-arabinose aminotransferase"/>
    <property type="evidence" value="ECO:0007669"/>
    <property type="project" value="UniProtKB-EC"/>
</dbReference>
<dbReference type="GO" id="GO:0009245">
    <property type="term" value="P:lipid A biosynthetic process"/>
    <property type="evidence" value="ECO:0007669"/>
    <property type="project" value="UniProtKB-KW"/>
</dbReference>
<dbReference type="GO" id="GO:0009103">
    <property type="term" value="P:lipopolysaccharide biosynthetic process"/>
    <property type="evidence" value="ECO:0007669"/>
    <property type="project" value="UniProtKB-UniRule"/>
</dbReference>
<dbReference type="GO" id="GO:0000271">
    <property type="term" value="P:polysaccharide biosynthetic process"/>
    <property type="evidence" value="ECO:0000318"/>
    <property type="project" value="GO_Central"/>
</dbReference>
<dbReference type="GO" id="GO:0046677">
    <property type="term" value="P:response to antibiotic"/>
    <property type="evidence" value="ECO:0007669"/>
    <property type="project" value="UniProtKB-KW"/>
</dbReference>
<dbReference type="CDD" id="cd00616">
    <property type="entry name" value="AHBA_syn"/>
    <property type="match status" value="1"/>
</dbReference>
<dbReference type="FunFam" id="3.40.640.10:FF:000040">
    <property type="entry name" value="UDP-4-amino-4-deoxy-L-arabinose--oxoglutarate aminotransferase"/>
    <property type="match status" value="1"/>
</dbReference>
<dbReference type="FunFam" id="3.90.1150.10:FF:000030">
    <property type="entry name" value="UDP-4-amino-4-deoxy-L-arabinose--oxoglutarate aminotransferase"/>
    <property type="match status" value="1"/>
</dbReference>
<dbReference type="Gene3D" id="3.90.1150.10">
    <property type="entry name" value="Aspartate Aminotransferase, domain 1"/>
    <property type="match status" value="1"/>
</dbReference>
<dbReference type="Gene3D" id="3.40.640.10">
    <property type="entry name" value="Type I PLP-dependent aspartate aminotransferase-like (Major domain)"/>
    <property type="match status" value="1"/>
</dbReference>
<dbReference type="HAMAP" id="MF_01167">
    <property type="entry name" value="ArnB_transfer"/>
    <property type="match status" value="1"/>
</dbReference>
<dbReference type="InterPro" id="IPR022850">
    <property type="entry name" value="ArnB_NH2Trfase"/>
</dbReference>
<dbReference type="InterPro" id="IPR000653">
    <property type="entry name" value="DegT/StrS_aminotransferase"/>
</dbReference>
<dbReference type="InterPro" id="IPR015424">
    <property type="entry name" value="PyrdxlP-dep_Trfase"/>
</dbReference>
<dbReference type="InterPro" id="IPR015421">
    <property type="entry name" value="PyrdxlP-dep_Trfase_major"/>
</dbReference>
<dbReference type="InterPro" id="IPR015422">
    <property type="entry name" value="PyrdxlP-dep_Trfase_small"/>
</dbReference>
<dbReference type="NCBIfam" id="NF008658">
    <property type="entry name" value="PRK11658.1"/>
    <property type="match status" value="1"/>
</dbReference>
<dbReference type="PANTHER" id="PTHR30244">
    <property type="entry name" value="TRANSAMINASE"/>
    <property type="match status" value="1"/>
</dbReference>
<dbReference type="PANTHER" id="PTHR30244:SF41">
    <property type="entry name" value="UDP-4-AMINO-4-DEOXY-L-ARABINOSE--OXOGLUTARATE AMINOTRANSFERASE"/>
    <property type="match status" value="1"/>
</dbReference>
<dbReference type="Pfam" id="PF01041">
    <property type="entry name" value="DegT_DnrJ_EryC1"/>
    <property type="match status" value="1"/>
</dbReference>
<dbReference type="PIRSF" id="PIRSF000390">
    <property type="entry name" value="PLP_StrS"/>
    <property type="match status" value="1"/>
</dbReference>
<dbReference type="SUPFAM" id="SSF53383">
    <property type="entry name" value="PLP-dependent transferases"/>
    <property type="match status" value="1"/>
</dbReference>
<evidence type="ECO:0000255" key="1">
    <source>
        <dbReference type="HAMAP-Rule" id="MF_01167"/>
    </source>
</evidence>
<accession>Q93PE0</accession>
<accession>Q0WEA3</accession>
<accession>Q74TF3</accession>
<accession>Q7CIU2</accession>
<protein>
    <recommendedName>
        <fullName evidence="1">UDP-4-amino-4-deoxy-L-arabinose--oxoglutarate aminotransferase</fullName>
        <ecNumber evidence="1">2.6.1.87</ecNumber>
    </recommendedName>
    <alternativeName>
        <fullName evidence="1">UDP-(beta-L-threo-pentapyranosyl-4''-ulose diphosphate) aminotransferase</fullName>
        <shortName evidence="1">UDP-Ara4O aminotransferase</shortName>
    </alternativeName>
    <alternativeName>
        <fullName evidence="1">UDP-4-amino-4-deoxy-L-arabinose aminotransferase</fullName>
    </alternativeName>
</protein>
<comment type="function">
    <text evidence="1">Catalyzes the conversion of UDP-4-keto-arabinose (UDP-Ara4O) to UDP-4-amino-4-deoxy-L-arabinose (UDP-L-Ara4N). The modified arabinose is attached to lipid A and is required for resistance to polymyxin and cationic antimicrobial peptides.</text>
</comment>
<comment type="catalytic activity">
    <reaction evidence="1">
        <text>UDP-4-amino-4-deoxy-beta-L-arabinose + 2-oxoglutarate = UDP-beta-L-threo-pentopyranos-4-ulose + L-glutamate</text>
        <dbReference type="Rhea" id="RHEA:24710"/>
        <dbReference type="ChEBI" id="CHEBI:16810"/>
        <dbReference type="ChEBI" id="CHEBI:29985"/>
        <dbReference type="ChEBI" id="CHEBI:58708"/>
        <dbReference type="ChEBI" id="CHEBI:58710"/>
        <dbReference type="EC" id="2.6.1.87"/>
    </reaction>
</comment>
<comment type="cofactor">
    <cofactor evidence="1">
        <name>pyridoxal 5'-phosphate</name>
        <dbReference type="ChEBI" id="CHEBI:597326"/>
    </cofactor>
</comment>
<comment type="pathway">
    <text evidence="1">Nucleotide-sugar biosynthesis; UDP-4-deoxy-4-formamido-beta-L-arabinose biosynthesis; UDP-4-deoxy-4-formamido-beta-L-arabinose from UDP-alpha-D-glucuronate: step 2/3.</text>
</comment>
<comment type="pathway">
    <text evidence="1">Bacterial outer membrane biogenesis; lipopolysaccharide biosynthesis.</text>
</comment>
<comment type="subunit">
    <text evidence="1">Homodimer.</text>
</comment>
<comment type="similarity">
    <text evidence="1">Belongs to the DegT/DnrJ/EryC1 family. ArnB subfamily.</text>
</comment>
<reference key="1">
    <citation type="journal article" date="2001" name="Nature">
        <title>Genome sequence of Yersinia pestis, the causative agent of plague.</title>
        <authorList>
            <person name="Parkhill J."/>
            <person name="Wren B.W."/>
            <person name="Thomson N.R."/>
            <person name="Titball R.W."/>
            <person name="Holden M.T.G."/>
            <person name="Prentice M.B."/>
            <person name="Sebaihia M."/>
            <person name="James K.D."/>
            <person name="Churcher C.M."/>
            <person name="Mungall K.L."/>
            <person name="Baker S."/>
            <person name="Basham D."/>
            <person name="Bentley S.D."/>
            <person name="Brooks K."/>
            <person name="Cerdeno-Tarraga A.-M."/>
            <person name="Chillingworth T."/>
            <person name="Cronin A."/>
            <person name="Davies R.M."/>
            <person name="Davis P."/>
            <person name="Dougan G."/>
            <person name="Feltwell T."/>
            <person name="Hamlin N."/>
            <person name="Holroyd S."/>
            <person name="Jagels K."/>
            <person name="Karlyshev A.V."/>
            <person name="Leather S."/>
            <person name="Moule S."/>
            <person name="Oyston P.C.F."/>
            <person name="Quail M.A."/>
            <person name="Rutherford K.M."/>
            <person name="Simmonds M."/>
            <person name="Skelton J."/>
            <person name="Stevens K."/>
            <person name="Whitehead S."/>
            <person name="Barrell B.G."/>
        </authorList>
    </citation>
    <scope>NUCLEOTIDE SEQUENCE [LARGE SCALE GENOMIC DNA]</scope>
    <source>
        <strain>CO-92 / Biovar Orientalis</strain>
    </source>
</reference>
<reference key="2">
    <citation type="journal article" date="2002" name="J. Bacteriol.">
        <title>Genome sequence of Yersinia pestis KIM.</title>
        <authorList>
            <person name="Deng W."/>
            <person name="Burland V."/>
            <person name="Plunkett G. III"/>
            <person name="Boutin A."/>
            <person name="Mayhew G.F."/>
            <person name="Liss P."/>
            <person name="Perna N.T."/>
            <person name="Rose D.J."/>
            <person name="Mau B."/>
            <person name="Zhou S."/>
            <person name="Schwartz D.C."/>
            <person name="Fetherston J.D."/>
            <person name="Lindler L.E."/>
            <person name="Brubaker R.R."/>
            <person name="Plano G.V."/>
            <person name="Straley S.C."/>
            <person name="McDonough K.A."/>
            <person name="Nilles M.L."/>
            <person name="Matson J.S."/>
            <person name="Blattner F.R."/>
            <person name="Perry R.D."/>
        </authorList>
    </citation>
    <scope>NUCLEOTIDE SEQUENCE [LARGE SCALE GENOMIC DNA]</scope>
    <source>
        <strain>KIM10+ / Biovar Mediaevalis</strain>
    </source>
</reference>
<reference key="3">
    <citation type="journal article" date="2004" name="DNA Res.">
        <title>Complete genome sequence of Yersinia pestis strain 91001, an isolate avirulent to humans.</title>
        <authorList>
            <person name="Song Y."/>
            <person name="Tong Z."/>
            <person name="Wang J."/>
            <person name="Wang L."/>
            <person name="Guo Z."/>
            <person name="Han Y."/>
            <person name="Zhang J."/>
            <person name="Pei D."/>
            <person name="Zhou D."/>
            <person name="Qin H."/>
            <person name="Pang X."/>
            <person name="Han Y."/>
            <person name="Zhai J."/>
            <person name="Li M."/>
            <person name="Cui B."/>
            <person name="Qi Z."/>
            <person name="Jin L."/>
            <person name="Dai R."/>
            <person name="Chen F."/>
            <person name="Li S."/>
            <person name="Ye C."/>
            <person name="Du Z."/>
            <person name="Lin W."/>
            <person name="Wang J."/>
            <person name="Yu J."/>
            <person name="Yang H."/>
            <person name="Wang J."/>
            <person name="Huang P."/>
            <person name="Yang R."/>
        </authorList>
    </citation>
    <scope>NUCLEOTIDE SEQUENCE [LARGE SCALE GENOMIC DNA]</scope>
    <source>
        <strain>91001 / Biovar Mediaevalis</strain>
    </source>
</reference>
<gene>
    <name evidence="1" type="primary">arnB</name>
    <name type="ordered locus">YPO2422</name>
    <name type="ordered locus">y1917</name>
    <name type="ordered locus">YP_2209</name>
</gene>
<sequence>MQSFLPFSRPAIGSEEINAVANVLGSGWITTGPQNHQLETDFCQIFGCKHAIAVCSATAGMHITLLALGIGPGDEVITPSQTWVSTINMIVLLGAEPVMVDVDRDTLMVNAAAIEAAITPNTKAIIPVHYAGAPCDLDALRQISQRHGIPLIEDAAHAVGTRYRDQWIGEQGTAIFSFHAIKNITCAEGGLVATDDDELAARVRRLKFHGLGVDAFDRQIQGRSPQAEVVEPGYKYNLSDIHAAIAVVQLRRLPEINARRQALVASYHKALAHLPLQPLALPHYSHQHAWHLFMVRVDEERCGISRDQLMACLKDMGIGSGLHFRAVHSQKYYRERYPHLCLPNTEWNSARLCTLPLFPDMLDSDIERVANALTTIIGSHRVTK</sequence>
<name>ARNB_YERPE</name>